<dbReference type="EMBL" id="DS231663">
    <property type="protein sequence ID" value="ESU06116.1"/>
    <property type="molecule type" value="Genomic_DNA"/>
</dbReference>
<dbReference type="EMBL" id="HG970332">
    <property type="protein sequence ID" value="CEF72894.1"/>
    <property type="molecule type" value="Genomic_DNA"/>
</dbReference>
<dbReference type="RefSeq" id="XP_011316601.1">
    <property type="nucleotide sequence ID" value="XM_011318299.1"/>
</dbReference>
<dbReference type="SMR" id="Q4IPI4"/>
<dbReference type="FunCoup" id="Q4IPI4">
    <property type="interactions" value="288"/>
</dbReference>
<dbReference type="STRING" id="229533.Q4IPI4"/>
<dbReference type="GeneID" id="23548342"/>
<dbReference type="KEGG" id="fgr:FGSG_00874"/>
<dbReference type="VEuPathDB" id="FungiDB:FGRAMPH1_01G02187"/>
<dbReference type="eggNOG" id="KOG0679">
    <property type="taxonomic scope" value="Eukaryota"/>
</dbReference>
<dbReference type="HOGENOM" id="CLU_027965_6_2_1"/>
<dbReference type="InParanoid" id="Q4IPI4"/>
<dbReference type="OrthoDB" id="44485at110618"/>
<dbReference type="Proteomes" id="UP000070720">
    <property type="component" value="Chromosome 1"/>
</dbReference>
<dbReference type="GO" id="GO:0005634">
    <property type="term" value="C:nucleus"/>
    <property type="evidence" value="ECO:0007669"/>
    <property type="project" value="UniProtKB-SubCell"/>
</dbReference>
<dbReference type="GO" id="GO:0006325">
    <property type="term" value="P:chromatin organization"/>
    <property type="evidence" value="ECO:0007669"/>
    <property type="project" value="UniProtKB-KW"/>
</dbReference>
<dbReference type="GO" id="GO:0006281">
    <property type="term" value="P:DNA repair"/>
    <property type="evidence" value="ECO:0007669"/>
    <property type="project" value="UniProtKB-KW"/>
</dbReference>
<dbReference type="CDD" id="cd13395">
    <property type="entry name" value="ASKHA_NBD_Arp4_ACTL6-like"/>
    <property type="match status" value="1"/>
</dbReference>
<dbReference type="FunFam" id="3.30.420.40:FF:000137">
    <property type="entry name" value="Actin-related protein 4"/>
    <property type="match status" value="1"/>
</dbReference>
<dbReference type="Gene3D" id="3.30.420.40">
    <property type="match status" value="3"/>
</dbReference>
<dbReference type="Gene3D" id="3.90.640.10">
    <property type="entry name" value="Actin, Chain A, domain 4"/>
    <property type="match status" value="1"/>
</dbReference>
<dbReference type="InterPro" id="IPR004000">
    <property type="entry name" value="Actin"/>
</dbReference>
<dbReference type="InterPro" id="IPR004001">
    <property type="entry name" value="Actin_CS"/>
</dbReference>
<dbReference type="InterPro" id="IPR043129">
    <property type="entry name" value="ATPase_NBD"/>
</dbReference>
<dbReference type="PANTHER" id="PTHR11937">
    <property type="entry name" value="ACTIN"/>
    <property type="match status" value="1"/>
</dbReference>
<dbReference type="Pfam" id="PF00022">
    <property type="entry name" value="Actin"/>
    <property type="match status" value="1"/>
</dbReference>
<dbReference type="SMART" id="SM00268">
    <property type="entry name" value="ACTIN"/>
    <property type="match status" value="1"/>
</dbReference>
<dbReference type="SUPFAM" id="SSF53067">
    <property type="entry name" value="Actin-like ATPase domain"/>
    <property type="match status" value="2"/>
</dbReference>
<dbReference type="PROSITE" id="PS00432">
    <property type="entry name" value="ACTINS_2"/>
    <property type="match status" value="1"/>
</dbReference>
<comment type="function">
    <text evidence="1">Chromatin interaction component of the NuA4 histone acetyltransferase complex which is involved in transcriptional activation of selected genes principally by acetylation of nucleosomal histone H4 and H2A. The NuA4 complex is also involved in DNA repair. Is required for NuA4 complex integrity. Component of the SWR1 complex which mediates the ATP-dependent exchange of histone H2A for the H2A variant HZT1 leading to transcriptional regulation of selected genes by chromatin remodeling. Component of the INO80 complex which remodels chromatin by shifting nucleosomes and is involved in DNA repair (By similarity).</text>
</comment>
<comment type="subunit">
    <text evidence="1">Component of the NuA4 histone acetyltransferase complex, of the INO80 chromatin remodeling complex, and of the SWR1 chromatin remodeling complex.</text>
</comment>
<comment type="subcellular location">
    <subcellularLocation>
        <location evidence="1">Nucleus</location>
    </subcellularLocation>
</comment>
<comment type="similarity">
    <text evidence="3">Belongs to the actin family. ARP4 subfamily.</text>
</comment>
<proteinExistence type="inferred from homology"/>
<keyword id="KW-0010">Activator</keyword>
<keyword id="KW-0156">Chromatin regulator</keyword>
<keyword id="KW-0227">DNA damage</keyword>
<keyword id="KW-0234">DNA repair</keyword>
<keyword id="KW-0539">Nucleus</keyword>
<keyword id="KW-1185">Reference proteome</keyword>
<keyword id="KW-0804">Transcription</keyword>
<keyword id="KW-0805">Transcription regulation</keyword>
<gene>
    <name type="primary">ARP4</name>
    <name type="ORF">FGRRES_00874</name>
    <name type="ORF">FGSG_00874</name>
</gene>
<reference key="1">
    <citation type="journal article" date="2007" name="Science">
        <title>The Fusarium graminearum genome reveals a link between localized polymorphism and pathogen specialization.</title>
        <authorList>
            <person name="Cuomo C.A."/>
            <person name="Gueldener U."/>
            <person name="Xu J.-R."/>
            <person name="Trail F."/>
            <person name="Turgeon B.G."/>
            <person name="Di Pietro A."/>
            <person name="Walton J.D."/>
            <person name="Ma L.-J."/>
            <person name="Baker S.E."/>
            <person name="Rep M."/>
            <person name="Adam G."/>
            <person name="Antoniw J."/>
            <person name="Baldwin T."/>
            <person name="Calvo S.E."/>
            <person name="Chang Y.-L."/>
            <person name="DeCaprio D."/>
            <person name="Gale L.R."/>
            <person name="Gnerre S."/>
            <person name="Goswami R.S."/>
            <person name="Hammond-Kosack K."/>
            <person name="Harris L.J."/>
            <person name="Hilburn K."/>
            <person name="Kennell J.C."/>
            <person name="Kroken S."/>
            <person name="Magnuson J.K."/>
            <person name="Mannhaupt G."/>
            <person name="Mauceli E.W."/>
            <person name="Mewes H.-W."/>
            <person name="Mitterbauer R."/>
            <person name="Muehlbauer G."/>
            <person name="Muensterkoetter M."/>
            <person name="Nelson D."/>
            <person name="O'Donnell K."/>
            <person name="Ouellet T."/>
            <person name="Qi W."/>
            <person name="Quesneville H."/>
            <person name="Roncero M.I.G."/>
            <person name="Seong K.-Y."/>
            <person name="Tetko I.V."/>
            <person name="Urban M."/>
            <person name="Waalwijk C."/>
            <person name="Ward T.J."/>
            <person name="Yao J."/>
            <person name="Birren B.W."/>
            <person name="Kistler H.C."/>
        </authorList>
    </citation>
    <scope>NUCLEOTIDE SEQUENCE [LARGE SCALE GENOMIC DNA]</scope>
    <source>
        <strain>ATCC MYA-4620 / CBS 123657 / FGSC 9075 / NRRL 31084 / PH-1</strain>
    </source>
</reference>
<reference key="2">
    <citation type="journal article" date="2010" name="Nature">
        <title>Comparative genomics reveals mobile pathogenicity chromosomes in Fusarium.</title>
        <authorList>
            <person name="Ma L.-J."/>
            <person name="van der Does H.C."/>
            <person name="Borkovich K.A."/>
            <person name="Coleman J.J."/>
            <person name="Daboussi M.-J."/>
            <person name="Di Pietro A."/>
            <person name="Dufresne M."/>
            <person name="Freitag M."/>
            <person name="Grabherr M."/>
            <person name="Henrissat B."/>
            <person name="Houterman P.M."/>
            <person name="Kang S."/>
            <person name="Shim W.-B."/>
            <person name="Woloshuk C."/>
            <person name="Xie X."/>
            <person name="Xu J.-R."/>
            <person name="Antoniw J."/>
            <person name="Baker S.E."/>
            <person name="Bluhm B.H."/>
            <person name="Breakspear A."/>
            <person name="Brown D.W."/>
            <person name="Butchko R.A.E."/>
            <person name="Chapman S."/>
            <person name="Coulson R."/>
            <person name="Coutinho P.M."/>
            <person name="Danchin E.G.J."/>
            <person name="Diener A."/>
            <person name="Gale L.R."/>
            <person name="Gardiner D.M."/>
            <person name="Goff S."/>
            <person name="Hammond-Kosack K.E."/>
            <person name="Hilburn K."/>
            <person name="Hua-Van A."/>
            <person name="Jonkers W."/>
            <person name="Kazan K."/>
            <person name="Kodira C.D."/>
            <person name="Koehrsen M."/>
            <person name="Kumar L."/>
            <person name="Lee Y.-H."/>
            <person name="Li L."/>
            <person name="Manners J.M."/>
            <person name="Miranda-Saavedra D."/>
            <person name="Mukherjee M."/>
            <person name="Park G."/>
            <person name="Park J."/>
            <person name="Park S.-Y."/>
            <person name="Proctor R.H."/>
            <person name="Regev A."/>
            <person name="Ruiz-Roldan M.C."/>
            <person name="Sain D."/>
            <person name="Sakthikumar S."/>
            <person name="Sykes S."/>
            <person name="Schwartz D.C."/>
            <person name="Turgeon B.G."/>
            <person name="Wapinski I."/>
            <person name="Yoder O."/>
            <person name="Young S."/>
            <person name="Zeng Q."/>
            <person name="Zhou S."/>
            <person name="Galagan J."/>
            <person name="Cuomo C.A."/>
            <person name="Kistler H.C."/>
            <person name="Rep M."/>
        </authorList>
    </citation>
    <scope>GENOME REANNOTATION</scope>
    <source>
        <strain>ATCC MYA-4620 / CBS 123657 / FGSC 9075 / NRRL 31084 / PH-1</strain>
    </source>
</reference>
<reference key="3">
    <citation type="journal article" date="2015" name="BMC Genomics">
        <title>The completed genome sequence of the pathogenic ascomycete fungus Fusarium graminearum.</title>
        <authorList>
            <person name="King R."/>
            <person name="Urban M."/>
            <person name="Hammond-Kosack M.C.U."/>
            <person name="Hassani-Pak K."/>
            <person name="Hammond-Kosack K.E."/>
        </authorList>
    </citation>
    <scope>NUCLEOTIDE SEQUENCE [LARGE SCALE GENOMIC DNA]</scope>
    <source>
        <strain>ATCC MYA-4620 / CBS 123657 / FGSC 9075 / NRRL 31084 / PH-1</strain>
    </source>
</reference>
<feature type="chain" id="PRO_0000089097" description="Actin-related protein 4">
    <location>
        <begin position="1"/>
        <end position="471"/>
    </location>
</feature>
<feature type="region of interest" description="Disordered" evidence="2">
    <location>
        <begin position="103"/>
        <end position="132"/>
    </location>
</feature>
<feature type="compositionally biased region" description="Polar residues" evidence="2">
    <location>
        <begin position="107"/>
        <end position="116"/>
    </location>
</feature>
<protein>
    <recommendedName>
        <fullName>Actin-related protein 4</fullName>
    </recommendedName>
    <alternativeName>
        <fullName>Actin-like protein ARP4</fullName>
        <shortName>Actin-like protein 4</shortName>
    </alternativeName>
</protein>
<accession>Q4IPI4</accession>
<accession>A0A0E0RNR9</accession>
<accession>V6QV47</accession>
<evidence type="ECO:0000250" key="1"/>
<evidence type="ECO:0000256" key="2">
    <source>
        <dbReference type="SAM" id="MobiDB-lite"/>
    </source>
</evidence>
<evidence type="ECO:0000305" key="3"/>
<sequence>MAQQPLSSSAQPTDIYGGDEVSALVLDPGYCSTRAGFAGEDVPKSILPSFYGHVTGDNSRDLFGDECLIPRENYEVRNYMNKDSVVEDWDVAARIWENMLVNRLQPERQTPPSKNGLNDDPRPEGQDGEGDVAMDDAEAESMEKPLGENPLLVTEAPWNTPKAREKAIEIIMENWGCPAFWMSRTPVLAAFAAGKATSLVIDVGGANTSVTAIHDGMVLKRSIQKSPVGGIWLSSQIRSLFETSEPQVELTPTFMIENKTPVDALSSPSVRLRNFPYSITDSFRAYEEERVLTEFKESVVEVWRGPGRYSVPGNEEFVKTQPGRVFEMPDGYNQMWREQRFRVTEGMWDENAGYPIPEADRLNKTQTIPELIRAALNAVDVDLRGNLLANVVVTGSTSLINGFNDRLNTELMAMYPGLKIKIHAAGLTSERRFGAWIGGSILASLGTFHQMWISRKEYEENGPNVVEKRCK</sequence>
<name>ARP4_GIBZE</name>
<organism>
    <name type="scientific">Gibberella zeae (strain ATCC MYA-4620 / CBS 123657 / FGSC 9075 / NRRL 31084 / PH-1)</name>
    <name type="common">Wheat head blight fungus</name>
    <name type="synonym">Fusarium graminearum</name>
    <dbReference type="NCBI Taxonomy" id="229533"/>
    <lineage>
        <taxon>Eukaryota</taxon>
        <taxon>Fungi</taxon>
        <taxon>Dikarya</taxon>
        <taxon>Ascomycota</taxon>
        <taxon>Pezizomycotina</taxon>
        <taxon>Sordariomycetes</taxon>
        <taxon>Hypocreomycetidae</taxon>
        <taxon>Hypocreales</taxon>
        <taxon>Nectriaceae</taxon>
        <taxon>Fusarium</taxon>
    </lineage>
</organism>